<organism>
    <name type="scientific">Campylobacter jejuni (strain RM1221)</name>
    <dbReference type="NCBI Taxonomy" id="195099"/>
    <lineage>
        <taxon>Bacteria</taxon>
        <taxon>Pseudomonadati</taxon>
        <taxon>Campylobacterota</taxon>
        <taxon>Epsilonproteobacteria</taxon>
        <taxon>Campylobacterales</taxon>
        <taxon>Campylobacteraceae</taxon>
        <taxon>Campylobacter</taxon>
    </lineage>
</organism>
<dbReference type="EMBL" id="CP000025">
    <property type="protein sequence ID" value="AAW35718.1"/>
    <property type="molecule type" value="Genomic_DNA"/>
</dbReference>
<dbReference type="RefSeq" id="WP_011049920.1">
    <property type="nucleotide sequence ID" value="NC_003912.7"/>
</dbReference>
<dbReference type="SMR" id="Q5HTK0"/>
<dbReference type="KEGG" id="cjr:CJE1399"/>
<dbReference type="HOGENOM" id="CLU_060739_1_1_7"/>
<dbReference type="GO" id="GO:0003677">
    <property type="term" value="F:DNA binding"/>
    <property type="evidence" value="ECO:0007669"/>
    <property type="project" value="UniProtKB-UniRule"/>
</dbReference>
<dbReference type="GO" id="GO:0008270">
    <property type="term" value="F:zinc ion binding"/>
    <property type="evidence" value="ECO:0007669"/>
    <property type="project" value="UniProtKB-KW"/>
</dbReference>
<dbReference type="GO" id="GO:0006310">
    <property type="term" value="P:DNA recombination"/>
    <property type="evidence" value="ECO:0007669"/>
    <property type="project" value="UniProtKB-UniRule"/>
</dbReference>
<dbReference type="GO" id="GO:0006281">
    <property type="term" value="P:DNA repair"/>
    <property type="evidence" value="ECO:0007669"/>
    <property type="project" value="UniProtKB-UniRule"/>
</dbReference>
<dbReference type="CDD" id="cd01025">
    <property type="entry name" value="TOPRIM_recR"/>
    <property type="match status" value="1"/>
</dbReference>
<dbReference type="Gene3D" id="3.30.60.80">
    <property type="match status" value="1"/>
</dbReference>
<dbReference type="Gene3D" id="3.40.1360.10">
    <property type="match status" value="1"/>
</dbReference>
<dbReference type="Gene3D" id="1.10.8.420">
    <property type="entry name" value="RecR Domain 1"/>
    <property type="match status" value="1"/>
</dbReference>
<dbReference type="HAMAP" id="MF_00017">
    <property type="entry name" value="RecR"/>
    <property type="match status" value="1"/>
</dbReference>
<dbReference type="InterPro" id="IPR000093">
    <property type="entry name" value="DNA_Rcmb_RecR"/>
</dbReference>
<dbReference type="InterPro" id="IPR023627">
    <property type="entry name" value="Rcmb_RecR"/>
</dbReference>
<dbReference type="InterPro" id="IPR015967">
    <property type="entry name" value="Rcmb_RecR_Znf"/>
</dbReference>
<dbReference type="InterPro" id="IPR006171">
    <property type="entry name" value="TOPRIM_dom"/>
</dbReference>
<dbReference type="InterPro" id="IPR034137">
    <property type="entry name" value="TOPRIM_RecR"/>
</dbReference>
<dbReference type="NCBIfam" id="TIGR00615">
    <property type="entry name" value="recR"/>
    <property type="match status" value="1"/>
</dbReference>
<dbReference type="PANTHER" id="PTHR30446">
    <property type="entry name" value="RECOMBINATION PROTEIN RECR"/>
    <property type="match status" value="1"/>
</dbReference>
<dbReference type="PANTHER" id="PTHR30446:SF0">
    <property type="entry name" value="RECOMBINATION PROTEIN RECR"/>
    <property type="match status" value="1"/>
</dbReference>
<dbReference type="Pfam" id="PF21176">
    <property type="entry name" value="RecR_HhH"/>
    <property type="match status" value="1"/>
</dbReference>
<dbReference type="Pfam" id="PF02132">
    <property type="entry name" value="RecR_ZnF"/>
    <property type="match status" value="1"/>
</dbReference>
<dbReference type="Pfam" id="PF13662">
    <property type="entry name" value="Toprim_4"/>
    <property type="match status" value="1"/>
</dbReference>
<dbReference type="SUPFAM" id="SSF111304">
    <property type="entry name" value="Recombination protein RecR"/>
    <property type="match status" value="1"/>
</dbReference>
<dbReference type="PROSITE" id="PS01300">
    <property type="entry name" value="RECR"/>
    <property type="match status" value="1"/>
</dbReference>
<dbReference type="PROSITE" id="PS50880">
    <property type="entry name" value="TOPRIM"/>
    <property type="match status" value="1"/>
</dbReference>
<name>RECR_CAMJR</name>
<reference key="1">
    <citation type="journal article" date="2005" name="PLoS Biol.">
        <title>Major structural differences and novel potential virulence mechanisms from the genomes of multiple Campylobacter species.</title>
        <authorList>
            <person name="Fouts D.E."/>
            <person name="Mongodin E.F."/>
            <person name="Mandrell R.E."/>
            <person name="Miller W.G."/>
            <person name="Rasko D.A."/>
            <person name="Ravel J."/>
            <person name="Brinkac L.M."/>
            <person name="DeBoy R.T."/>
            <person name="Parker C.T."/>
            <person name="Daugherty S.C."/>
            <person name="Dodson R.J."/>
            <person name="Durkin A.S."/>
            <person name="Madupu R."/>
            <person name="Sullivan S.A."/>
            <person name="Shetty J.U."/>
            <person name="Ayodeji M.A."/>
            <person name="Shvartsbeyn A."/>
            <person name="Schatz M.C."/>
            <person name="Badger J.H."/>
            <person name="Fraser C.M."/>
            <person name="Nelson K.E."/>
        </authorList>
    </citation>
    <scope>NUCLEOTIDE SEQUENCE [LARGE SCALE GENOMIC DNA]</scope>
    <source>
        <strain>RM1221</strain>
    </source>
</reference>
<proteinExistence type="inferred from homology"/>
<accession>Q5HTK0</accession>
<protein>
    <recommendedName>
        <fullName evidence="1">Recombination protein RecR</fullName>
    </recommendedName>
</protein>
<feature type="chain" id="PRO_0000190299" description="Recombination protein RecR">
    <location>
        <begin position="1"/>
        <end position="190"/>
    </location>
</feature>
<feature type="domain" description="Toprim" evidence="1">
    <location>
        <begin position="81"/>
        <end position="167"/>
    </location>
</feature>
<feature type="zinc finger region" description="C4-type" evidence="1">
    <location>
        <begin position="58"/>
        <end position="73"/>
    </location>
</feature>
<evidence type="ECO:0000255" key="1">
    <source>
        <dbReference type="HAMAP-Rule" id="MF_00017"/>
    </source>
</evidence>
<gene>
    <name evidence="1" type="primary">recR</name>
    <name type="ordered locus">CJE1399</name>
</gene>
<sequence length="190" mass="21525">MVKGLEKFNELVESFANLPTIGKKTAIRLAYHLCINNQIDGMKLAHNIENAIRFIKPCEQCGALSENELCEICSDEERNKNILCIVESPKDILTLEESQSYNGLYFVLDELNEEKLEKLKQIILKLNISELIFALTHSINSDATIFFIEDKFKGLNLTFSKIAQGIPSGINLENVDLISLNKAMNFRTKI</sequence>
<keyword id="KW-0227">DNA damage</keyword>
<keyword id="KW-0233">DNA recombination</keyword>
<keyword id="KW-0234">DNA repair</keyword>
<keyword id="KW-0479">Metal-binding</keyword>
<keyword id="KW-0862">Zinc</keyword>
<keyword id="KW-0863">Zinc-finger</keyword>
<comment type="function">
    <text evidence="1">May play a role in DNA repair. It seems to be involved in an RecBC-independent recombinational process of DNA repair. It may act with RecF and RecO.</text>
</comment>
<comment type="similarity">
    <text evidence="1">Belongs to the RecR family.</text>
</comment>